<protein>
    <recommendedName>
        <fullName>Elongation factor G</fullName>
        <shortName>EF-G</shortName>
    </recommendedName>
</protein>
<sequence length="692" mass="76529">MAREFSLAKTRNIGIMAHVDAGKTTTTERILYYTGKIHKIGETHEGASQMDWMEQEQERGITITSAATTAQWDGHRVNIIDTPGHVDFTIEVQRSLRVLDGAVTVLDSQSGVEPQTETVWRQATEYGVPRIVFANKMDKIGADFLYSVQTLHDRLQANAHPIQLPIGAEDDFRGIIDLIKMKAEIYTNDLGTDILEEDIPEEYLEQAQEYREKLIEAVAETDEDLMMKYLEGEEITNDELIAGIRKATINVEFFPVLCGSAFKNKGVQLMLDAVIAYLPSPLDIPAIKGVNPDTDAEEERPASDEEPFAALAFKIMTDPFVGRLTFFRVYSGVLNSGSYVMNTSKGKRERIGRILQMHANSRQEIETVYAGDIAAAVGLKDTTTGDSLTDEKAKVILESIEVPEPVIQLMVEPKSKADQDKMGVALQKLAEEDPTFRVETNVETGETVIAGMGELHLDVLVDRMKREFKVEANVGAPQVSYRETFRASTQARGFFKRQSGGKGQFGDVWIEFTPNEEGKGFEFENAIVGGVVPREFIPAVEKGLIESMANGVLAGYPMVDVKAKLYDGSYHDVDSSETAFKIAASLALKEAAKSAQPAILEPMMLVTITAPEDNLGDVMGHVTARRGRVDGMEAHGNSQIVRAYVPLAEMFGYATVLRSATQGRGTFMMVFDHYEDVPKSVQEEIIKKNKGE</sequence>
<keyword id="KW-0963">Cytoplasm</keyword>
<keyword id="KW-0251">Elongation factor</keyword>
<keyword id="KW-0342">GTP-binding</keyword>
<keyword id="KW-0547">Nucleotide-binding</keyword>
<keyword id="KW-0648">Protein biosynthesis</keyword>
<dbReference type="EMBL" id="AE009949">
    <property type="protein sequence ID" value="AAL97040.1"/>
    <property type="molecule type" value="Genomic_DNA"/>
</dbReference>
<dbReference type="RefSeq" id="WP_002986045.1">
    <property type="nucleotide sequence ID" value="NC_003485.1"/>
</dbReference>
<dbReference type="SMR" id="P69948"/>
<dbReference type="GeneID" id="69900199"/>
<dbReference type="KEGG" id="spm:spyM18_0260"/>
<dbReference type="HOGENOM" id="CLU_002794_4_1_9"/>
<dbReference type="GO" id="GO:0005737">
    <property type="term" value="C:cytoplasm"/>
    <property type="evidence" value="ECO:0007669"/>
    <property type="project" value="UniProtKB-SubCell"/>
</dbReference>
<dbReference type="GO" id="GO:0005525">
    <property type="term" value="F:GTP binding"/>
    <property type="evidence" value="ECO:0007669"/>
    <property type="project" value="UniProtKB-UniRule"/>
</dbReference>
<dbReference type="GO" id="GO:0003924">
    <property type="term" value="F:GTPase activity"/>
    <property type="evidence" value="ECO:0007669"/>
    <property type="project" value="InterPro"/>
</dbReference>
<dbReference type="GO" id="GO:0003746">
    <property type="term" value="F:translation elongation factor activity"/>
    <property type="evidence" value="ECO:0007669"/>
    <property type="project" value="UniProtKB-UniRule"/>
</dbReference>
<dbReference type="GO" id="GO:0032790">
    <property type="term" value="P:ribosome disassembly"/>
    <property type="evidence" value="ECO:0007669"/>
    <property type="project" value="TreeGrafter"/>
</dbReference>
<dbReference type="CDD" id="cd01886">
    <property type="entry name" value="EF-G"/>
    <property type="match status" value="1"/>
</dbReference>
<dbReference type="CDD" id="cd16262">
    <property type="entry name" value="EFG_III"/>
    <property type="match status" value="1"/>
</dbReference>
<dbReference type="CDD" id="cd01434">
    <property type="entry name" value="EFG_mtEFG1_IV"/>
    <property type="match status" value="1"/>
</dbReference>
<dbReference type="CDD" id="cd03713">
    <property type="entry name" value="EFG_mtEFG_C"/>
    <property type="match status" value="1"/>
</dbReference>
<dbReference type="CDD" id="cd04088">
    <property type="entry name" value="EFG_mtEFG_II"/>
    <property type="match status" value="1"/>
</dbReference>
<dbReference type="FunFam" id="2.40.30.10:FF:000006">
    <property type="entry name" value="Elongation factor G"/>
    <property type="match status" value="1"/>
</dbReference>
<dbReference type="FunFam" id="3.30.230.10:FF:000003">
    <property type="entry name" value="Elongation factor G"/>
    <property type="match status" value="1"/>
</dbReference>
<dbReference type="FunFam" id="3.30.70.240:FF:000001">
    <property type="entry name" value="Elongation factor G"/>
    <property type="match status" value="1"/>
</dbReference>
<dbReference type="FunFam" id="3.30.70.870:FF:000001">
    <property type="entry name" value="Elongation factor G"/>
    <property type="match status" value="1"/>
</dbReference>
<dbReference type="FunFam" id="3.40.50.300:FF:000029">
    <property type="entry name" value="Elongation factor G"/>
    <property type="match status" value="1"/>
</dbReference>
<dbReference type="Gene3D" id="3.30.230.10">
    <property type="match status" value="1"/>
</dbReference>
<dbReference type="Gene3D" id="3.30.70.240">
    <property type="match status" value="1"/>
</dbReference>
<dbReference type="Gene3D" id="3.30.70.870">
    <property type="entry name" value="Elongation Factor G (Translational Gtpase), domain 3"/>
    <property type="match status" value="1"/>
</dbReference>
<dbReference type="Gene3D" id="3.40.50.300">
    <property type="entry name" value="P-loop containing nucleotide triphosphate hydrolases"/>
    <property type="match status" value="1"/>
</dbReference>
<dbReference type="Gene3D" id="2.40.30.10">
    <property type="entry name" value="Translation factors"/>
    <property type="match status" value="1"/>
</dbReference>
<dbReference type="HAMAP" id="MF_00054_B">
    <property type="entry name" value="EF_G_EF_2_B"/>
    <property type="match status" value="1"/>
</dbReference>
<dbReference type="InterPro" id="IPR041095">
    <property type="entry name" value="EFG_II"/>
</dbReference>
<dbReference type="InterPro" id="IPR009022">
    <property type="entry name" value="EFG_III"/>
</dbReference>
<dbReference type="InterPro" id="IPR035647">
    <property type="entry name" value="EFG_III/V"/>
</dbReference>
<dbReference type="InterPro" id="IPR047872">
    <property type="entry name" value="EFG_IV"/>
</dbReference>
<dbReference type="InterPro" id="IPR035649">
    <property type="entry name" value="EFG_V"/>
</dbReference>
<dbReference type="InterPro" id="IPR000640">
    <property type="entry name" value="EFG_V-like"/>
</dbReference>
<dbReference type="InterPro" id="IPR004161">
    <property type="entry name" value="EFTu-like_2"/>
</dbReference>
<dbReference type="InterPro" id="IPR031157">
    <property type="entry name" value="G_TR_CS"/>
</dbReference>
<dbReference type="InterPro" id="IPR027417">
    <property type="entry name" value="P-loop_NTPase"/>
</dbReference>
<dbReference type="InterPro" id="IPR020568">
    <property type="entry name" value="Ribosomal_Su5_D2-typ_SF"/>
</dbReference>
<dbReference type="InterPro" id="IPR014721">
    <property type="entry name" value="Ribsml_uS5_D2-typ_fold_subgr"/>
</dbReference>
<dbReference type="InterPro" id="IPR005225">
    <property type="entry name" value="Small_GTP-bd"/>
</dbReference>
<dbReference type="InterPro" id="IPR000795">
    <property type="entry name" value="T_Tr_GTP-bd_dom"/>
</dbReference>
<dbReference type="InterPro" id="IPR009000">
    <property type="entry name" value="Transl_B-barrel_sf"/>
</dbReference>
<dbReference type="InterPro" id="IPR004540">
    <property type="entry name" value="Transl_elong_EFG/EF2"/>
</dbReference>
<dbReference type="InterPro" id="IPR005517">
    <property type="entry name" value="Transl_elong_EFG/EF2_IV"/>
</dbReference>
<dbReference type="NCBIfam" id="TIGR00484">
    <property type="entry name" value="EF-G"/>
    <property type="match status" value="1"/>
</dbReference>
<dbReference type="NCBIfam" id="NF009379">
    <property type="entry name" value="PRK12740.1-3"/>
    <property type="match status" value="1"/>
</dbReference>
<dbReference type="NCBIfam" id="NF009381">
    <property type="entry name" value="PRK12740.1-5"/>
    <property type="match status" value="1"/>
</dbReference>
<dbReference type="NCBIfam" id="TIGR00231">
    <property type="entry name" value="small_GTP"/>
    <property type="match status" value="1"/>
</dbReference>
<dbReference type="PANTHER" id="PTHR43261:SF1">
    <property type="entry name" value="RIBOSOME-RELEASING FACTOR 2, MITOCHONDRIAL"/>
    <property type="match status" value="1"/>
</dbReference>
<dbReference type="PANTHER" id="PTHR43261">
    <property type="entry name" value="TRANSLATION ELONGATION FACTOR G-RELATED"/>
    <property type="match status" value="1"/>
</dbReference>
<dbReference type="Pfam" id="PF00679">
    <property type="entry name" value="EFG_C"/>
    <property type="match status" value="1"/>
</dbReference>
<dbReference type="Pfam" id="PF14492">
    <property type="entry name" value="EFG_III"/>
    <property type="match status" value="1"/>
</dbReference>
<dbReference type="Pfam" id="PF03764">
    <property type="entry name" value="EFG_IV"/>
    <property type="match status" value="1"/>
</dbReference>
<dbReference type="Pfam" id="PF00009">
    <property type="entry name" value="GTP_EFTU"/>
    <property type="match status" value="1"/>
</dbReference>
<dbReference type="Pfam" id="PF03144">
    <property type="entry name" value="GTP_EFTU_D2"/>
    <property type="match status" value="1"/>
</dbReference>
<dbReference type="PRINTS" id="PR00315">
    <property type="entry name" value="ELONGATNFCT"/>
</dbReference>
<dbReference type="SMART" id="SM00838">
    <property type="entry name" value="EFG_C"/>
    <property type="match status" value="1"/>
</dbReference>
<dbReference type="SMART" id="SM00889">
    <property type="entry name" value="EFG_IV"/>
    <property type="match status" value="1"/>
</dbReference>
<dbReference type="SUPFAM" id="SSF54980">
    <property type="entry name" value="EF-G C-terminal domain-like"/>
    <property type="match status" value="2"/>
</dbReference>
<dbReference type="SUPFAM" id="SSF52540">
    <property type="entry name" value="P-loop containing nucleoside triphosphate hydrolases"/>
    <property type="match status" value="1"/>
</dbReference>
<dbReference type="SUPFAM" id="SSF54211">
    <property type="entry name" value="Ribosomal protein S5 domain 2-like"/>
    <property type="match status" value="1"/>
</dbReference>
<dbReference type="SUPFAM" id="SSF50447">
    <property type="entry name" value="Translation proteins"/>
    <property type="match status" value="1"/>
</dbReference>
<dbReference type="PROSITE" id="PS00301">
    <property type="entry name" value="G_TR_1"/>
    <property type="match status" value="1"/>
</dbReference>
<dbReference type="PROSITE" id="PS51722">
    <property type="entry name" value="G_TR_2"/>
    <property type="match status" value="1"/>
</dbReference>
<gene>
    <name type="primary">fus</name>
    <name type="synonym">fusA</name>
    <name type="ordered locus">spyM18_0260</name>
</gene>
<name>EFG_STRP8</name>
<reference key="1">
    <citation type="journal article" date="2002" name="Proc. Natl. Acad. Sci. U.S.A.">
        <title>Genome sequence and comparative microarray analysis of serotype M18 group A Streptococcus strains associated with acute rheumatic fever outbreaks.</title>
        <authorList>
            <person name="Smoot J.C."/>
            <person name="Barbian K.D."/>
            <person name="Van Gompel J.J."/>
            <person name="Smoot L.M."/>
            <person name="Chaussee M.S."/>
            <person name="Sylva G.L."/>
            <person name="Sturdevant D.E."/>
            <person name="Ricklefs S.M."/>
            <person name="Porcella S.F."/>
            <person name="Parkins L.D."/>
            <person name="Beres S.B."/>
            <person name="Campbell D.S."/>
            <person name="Smith T.M."/>
            <person name="Zhang Q."/>
            <person name="Kapur V."/>
            <person name="Daly J.A."/>
            <person name="Veasy L.G."/>
            <person name="Musser J.M."/>
        </authorList>
    </citation>
    <scope>NUCLEOTIDE SEQUENCE [LARGE SCALE GENOMIC DNA]</scope>
    <source>
        <strain>MGAS8232</strain>
    </source>
</reference>
<organism>
    <name type="scientific">Streptococcus pyogenes serotype M18 (strain MGAS8232)</name>
    <dbReference type="NCBI Taxonomy" id="186103"/>
    <lineage>
        <taxon>Bacteria</taxon>
        <taxon>Bacillati</taxon>
        <taxon>Bacillota</taxon>
        <taxon>Bacilli</taxon>
        <taxon>Lactobacillales</taxon>
        <taxon>Streptococcaceae</taxon>
        <taxon>Streptococcus</taxon>
    </lineage>
</organism>
<proteinExistence type="inferred from homology"/>
<accession>P69948</accession>
<accession>P82477</accession>
<feature type="initiator methionine" description="Removed" evidence="1">
    <location>
        <position position="1"/>
    </location>
</feature>
<feature type="chain" id="PRO_0000091235" description="Elongation factor G">
    <location>
        <begin position="2"/>
        <end position="692"/>
    </location>
</feature>
<feature type="domain" description="tr-type G">
    <location>
        <begin position="8"/>
        <end position="282"/>
    </location>
</feature>
<feature type="binding site" evidence="1">
    <location>
        <begin position="17"/>
        <end position="24"/>
    </location>
    <ligand>
        <name>GTP</name>
        <dbReference type="ChEBI" id="CHEBI:37565"/>
    </ligand>
</feature>
<feature type="binding site" evidence="1">
    <location>
        <begin position="81"/>
        <end position="85"/>
    </location>
    <ligand>
        <name>GTP</name>
        <dbReference type="ChEBI" id="CHEBI:37565"/>
    </ligand>
</feature>
<feature type="binding site" evidence="1">
    <location>
        <begin position="135"/>
        <end position="138"/>
    </location>
    <ligand>
        <name>GTP</name>
        <dbReference type="ChEBI" id="CHEBI:37565"/>
    </ligand>
</feature>
<evidence type="ECO:0000250" key="1"/>
<evidence type="ECO:0000305" key="2"/>
<comment type="function">
    <text evidence="1">Catalyzes the GTP-dependent ribosomal translocation step during translation elongation. During this step, the ribosome changes from the pre-translocational (PRE) to the post-translocational (POST) state as the newly formed A-site-bound peptidyl-tRNA and P-site-bound deacylated tRNA move to the P and E sites, respectively. Catalyzes the coordinated movement of the two tRNA molecules, the mRNA and conformational changes in the ribosome (By similarity).</text>
</comment>
<comment type="subcellular location">
    <subcellularLocation>
        <location>Cytoplasm</location>
    </subcellularLocation>
</comment>
<comment type="similarity">
    <text evidence="2">Belongs to the TRAFAC class translation factor GTPase superfamily. Classic translation factor GTPase family. EF-G/EF-2 subfamily.</text>
</comment>